<protein>
    <recommendedName>
        <fullName>Uncharacterized protein slr1300</fullName>
    </recommendedName>
</protein>
<name>Y1300_SYNY3</name>
<organism>
    <name type="scientific">Synechocystis sp. (strain ATCC 27184 / PCC 6803 / Kazusa)</name>
    <dbReference type="NCBI Taxonomy" id="1111708"/>
    <lineage>
        <taxon>Bacteria</taxon>
        <taxon>Bacillati</taxon>
        <taxon>Cyanobacteriota</taxon>
        <taxon>Cyanophyceae</taxon>
        <taxon>Synechococcales</taxon>
        <taxon>Merismopediaceae</taxon>
        <taxon>Synechocystis</taxon>
    </lineage>
</organism>
<feature type="chain" id="PRO_0000207588" description="Uncharacterized protein slr1300">
    <location>
        <begin position="1"/>
        <end position="414"/>
    </location>
</feature>
<evidence type="ECO:0000305" key="1"/>
<sequence length="414" mass="45624">MTFVAASITDNQFDVAIAGGGVVGLVLAAGLRHTGLKIAIIEALPKEQALTKPQAYAISLLSGKILAGLGVWENIKDSIGHFERIQISDNDYRGTVPFAKEDVDELALGHVAEHPVILQALENCVEQCPRIAWFRPAELISFTAGENHKQVTLQQEGREITLQTKLLVAADGARSHTRSLAGIQTKGWKYWQSCVAFTIQHQAPDNTTAFERFCDTGPMGILPLPGDRAQIVWTMPHHKAHTLVNLPEADFITELRQRIGDRLGEFHLINARRLFPVQLMQSDCYVQPRLALVGDAAHCCHPVGGQGLNLGIRDGAALAQVIATAHSQGEDWGSLAVLKRYEHWRKPENWLILGFTDLLDRFFSSHWLPAIALRRFGLEVLRLVPPAKKLALRLMTGLLGRKPQLATGQSLVSQ</sequence>
<keyword id="KW-0274">FAD</keyword>
<keyword id="KW-0285">Flavoprotein</keyword>
<keyword id="KW-0503">Monooxygenase</keyword>
<keyword id="KW-0560">Oxidoreductase</keyword>
<keyword id="KW-1185">Reference proteome</keyword>
<reference key="1">
    <citation type="journal article" date="1996" name="DNA Res.">
        <title>Sequence analysis of the genome of the unicellular cyanobacterium Synechocystis sp. strain PCC6803. II. Sequence determination of the entire genome and assignment of potential protein-coding regions.</title>
        <authorList>
            <person name="Kaneko T."/>
            <person name="Sato S."/>
            <person name="Kotani H."/>
            <person name="Tanaka A."/>
            <person name="Asamizu E."/>
            <person name="Nakamura Y."/>
            <person name="Miyajima N."/>
            <person name="Hirosawa M."/>
            <person name="Sugiura M."/>
            <person name="Sasamoto S."/>
            <person name="Kimura T."/>
            <person name="Hosouchi T."/>
            <person name="Matsuno A."/>
            <person name="Muraki A."/>
            <person name="Nakazaki N."/>
            <person name="Naruo K."/>
            <person name="Okumura S."/>
            <person name="Shimpo S."/>
            <person name="Takeuchi C."/>
            <person name="Wada T."/>
            <person name="Watanabe A."/>
            <person name="Yamada M."/>
            <person name="Yasuda M."/>
            <person name="Tabata S."/>
        </authorList>
    </citation>
    <scope>NUCLEOTIDE SEQUENCE [LARGE SCALE GENOMIC DNA]</scope>
    <source>
        <strain>ATCC 27184 / PCC 6803 / Kazusa</strain>
    </source>
</reference>
<dbReference type="EMBL" id="BA000022">
    <property type="protein sequence ID" value="BAA16850.1"/>
    <property type="molecule type" value="Genomic_DNA"/>
</dbReference>
<dbReference type="PIR" id="S74699">
    <property type="entry name" value="S74699"/>
</dbReference>
<dbReference type="SMR" id="P72835"/>
<dbReference type="FunCoup" id="P72835">
    <property type="interactions" value="282"/>
</dbReference>
<dbReference type="IntAct" id="P72835">
    <property type="interactions" value="4"/>
</dbReference>
<dbReference type="STRING" id="1148.gene:10497708"/>
<dbReference type="PaxDb" id="1148-1651924"/>
<dbReference type="EnsemblBacteria" id="BAA16850">
    <property type="protein sequence ID" value="BAA16850"/>
    <property type="gene ID" value="BAA16850"/>
</dbReference>
<dbReference type="KEGG" id="syn:slr1300"/>
<dbReference type="eggNOG" id="COG0654">
    <property type="taxonomic scope" value="Bacteria"/>
</dbReference>
<dbReference type="InParanoid" id="P72835"/>
<dbReference type="PhylomeDB" id="P72835"/>
<dbReference type="Proteomes" id="UP000001425">
    <property type="component" value="Chromosome"/>
</dbReference>
<dbReference type="GO" id="GO:0071949">
    <property type="term" value="F:FAD binding"/>
    <property type="evidence" value="ECO:0007669"/>
    <property type="project" value="InterPro"/>
</dbReference>
<dbReference type="GO" id="GO:0004497">
    <property type="term" value="F:monooxygenase activity"/>
    <property type="evidence" value="ECO:0007669"/>
    <property type="project" value="UniProtKB-KW"/>
</dbReference>
<dbReference type="GO" id="GO:0016705">
    <property type="term" value="F:oxidoreductase activity, acting on paired donors, with incorporation or reduction of molecular oxygen"/>
    <property type="evidence" value="ECO:0007669"/>
    <property type="project" value="InterPro"/>
</dbReference>
<dbReference type="GO" id="GO:0006744">
    <property type="term" value="P:ubiquinone biosynthetic process"/>
    <property type="evidence" value="ECO:0007669"/>
    <property type="project" value="InterPro"/>
</dbReference>
<dbReference type="FunFam" id="3.50.50.60:FF:000021">
    <property type="entry name" value="Ubiquinone biosynthesis monooxygenase COQ6"/>
    <property type="match status" value="1"/>
</dbReference>
<dbReference type="Gene3D" id="3.50.50.60">
    <property type="entry name" value="FAD/NAD(P)-binding domain"/>
    <property type="match status" value="2"/>
</dbReference>
<dbReference type="InterPro" id="IPR002938">
    <property type="entry name" value="FAD-bd"/>
</dbReference>
<dbReference type="InterPro" id="IPR036188">
    <property type="entry name" value="FAD/NAD-bd_sf"/>
</dbReference>
<dbReference type="InterPro" id="IPR018168">
    <property type="entry name" value="Ubi_Hdrlase_CS"/>
</dbReference>
<dbReference type="InterPro" id="IPR010971">
    <property type="entry name" value="UbiH/COQ6"/>
</dbReference>
<dbReference type="InterPro" id="IPR051205">
    <property type="entry name" value="UbiH/COQ6_monooxygenase"/>
</dbReference>
<dbReference type="NCBIfam" id="NF005612">
    <property type="entry name" value="PRK07364.1"/>
    <property type="match status" value="1"/>
</dbReference>
<dbReference type="NCBIfam" id="TIGR01988">
    <property type="entry name" value="Ubi-OHases"/>
    <property type="match status" value="1"/>
</dbReference>
<dbReference type="PANTHER" id="PTHR43876">
    <property type="entry name" value="UBIQUINONE BIOSYNTHESIS MONOOXYGENASE COQ6, MITOCHONDRIAL"/>
    <property type="match status" value="1"/>
</dbReference>
<dbReference type="PANTHER" id="PTHR43876:SF7">
    <property type="entry name" value="UBIQUINONE BIOSYNTHESIS MONOOXYGENASE COQ6, MITOCHONDRIAL"/>
    <property type="match status" value="1"/>
</dbReference>
<dbReference type="Pfam" id="PF01494">
    <property type="entry name" value="FAD_binding_3"/>
    <property type="match status" value="1"/>
</dbReference>
<dbReference type="PRINTS" id="PR00420">
    <property type="entry name" value="RNGMNOXGNASE"/>
</dbReference>
<dbReference type="SUPFAM" id="SSF51905">
    <property type="entry name" value="FAD/NAD(P)-binding domain"/>
    <property type="match status" value="1"/>
</dbReference>
<dbReference type="PROSITE" id="PS01304">
    <property type="entry name" value="UBIH"/>
    <property type="match status" value="1"/>
</dbReference>
<comment type="cofactor">
    <cofactor evidence="1">
        <name>FAD</name>
        <dbReference type="ChEBI" id="CHEBI:57692"/>
    </cofactor>
</comment>
<comment type="similarity">
    <text evidence="1">Belongs to the UbiH/COQ6 family.</text>
</comment>
<accession>P72835</accession>
<proteinExistence type="inferred from homology"/>
<gene>
    <name type="ordered locus">slr1300</name>
</gene>